<name>VL2_HPV13</name>
<protein>
    <recommendedName>
        <fullName evidence="1">Minor capsid protein L2</fullName>
    </recommendedName>
</protein>
<gene>
    <name evidence="1" type="primary">L2</name>
</gene>
<keyword id="KW-0167">Capsid protein</keyword>
<keyword id="KW-1176">Cytoplasmic inwards viral transport</keyword>
<keyword id="KW-1015">Disulfide bond</keyword>
<keyword id="KW-0238">DNA-binding</keyword>
<keyword id="KW-1039">Host endosome</keyword>
<keyword id="KW-1040">Host Golgi apparatus</keyword>
<keyword id="KW-1048">Host nucleus</keyword>
<keyword id="KW-0945">Host-virus interaction</keyword>
<keyword id="KW-0426">Late protein</keyword>
<keyword id="KW-1177">Microtubular inwards viral transport</keyword>
<keyword id="KW-0597">Phosphoprotein</keyword>
<keyword id="KW-1163">Viral penetration into host nucleus</keyword>
<keyword id="KW-0946">Virion</keyword>
<keyword id="KW-1160">Virus entry into host cell</keyword>
<organismHost>
    <name type="scientific">Homo sapiens</name>
    <name type="common">Human</name>
    <dbReference type="NCBI Taxonomy" id="9606"/>
</organismHost>
<comment type="function">
    <text evidence="1">Minor protein of the capsid that localizes along the inner surface of the virion, within the central cavities beneath the L1 pentamers. Plays a role in capsid stabilization through interaction with the major capsid protein L1. Once the virion enters the host cell, L2 escorts the genomic DNA into the nucleus by promoting escape from the endosomal compartments and traffic through the host Golgi network. Mechanistically, the C-terminus of L2 possesses a cell-penetrating peptide that protudes from the host endosome, interacts with host cytoplasmic retromer cargo and thereby mediates the capsid delivery to the host trans-Golgi network. Plays a role through its interaction with host dynein in the intracellular microtubule-dependent transport of viral capsid toward the nucleus. Mediates the viral genome import into the nucleus through binding to host importins. Once within the nucleus, L2 localizes viral genomes to host PML bodies in order to activate early gene expression for establishment of infection. Later on, promotes late gene expression by interacting with the viral E2 protein and by inhibiting its transcriptional activation functions. During virion assembly, encapsidates the genome by direct interaction with the viral DNA.</text>
</comment>
<comment type="subunit">
    <text evidence="1">Interacts with major capsid protein L1. Interacts with E2; this interaction inhibits E2 transcriptional activity but not the DNA replication function E2. Interacts with host GADD45GIP1. Interacts with host HSPA8; this interaction is required for L2 nuclear translocation. Interacts with host importins KPNB2 and KPNB3. Forms a complex with importin alpha2-beta1 heterodimers via interaction with the importin alpha2 adapter. Interacts with host DYNLT1; this interaction is essential for virus intracellular transport during entry. Interacts (via C-terminus) with host retromer subunits VPS35 and VPS29.</text>
</comment>
<comment type="subcellular location">
    <subcellularLocation>
        <location evidence="1">Virion</location>
    </subcellularLocation>
    <subcellularLocation>
        <location evidence="1">Host nucleus</location>
    </subcellularLocation>
    <subcellularLocation>
        <location evidence="1">Host early endosome</location>
    </subcellularLocation>
    <subcellularLocation>
        <location evidence="1">Host Golgi apparatus</location>
    </subcellularLocation>
</comment>
<comment type="PTM">
    <text evidence="1">Highly phosphorylated.</text>
</comment>
<comment type="similarity">
    <text evidence="1">Belongs to the papillomaviridae L2 protein family.</text>
</comment>
<proteinExistence type="inferred from homology"/>
<sequence length="463" mass="49352">MAHSRARRRKRASATQLYQTCKASGTCPPDVIPKVEQNTLADKILKWGSLGVFFGGLGIGTGSGTGGRTGYVPVGSTPRPAISTGPTARPPIVVDTVGPTDPSIVSLVEESAIINSGVPDPLPPVHGGFEITTSQSATPAILDVSVTTQNTTSTSIFRNPVFSEPSITQSQPSIESGAHVFISPSTISPHSTEDIPLDTFIVSSSDSNPASSTPVPATVARPRLGLYSRALHQVQVTDPAFLSSPQRLITFDNPTYEGEDISLQFAHNTIHEPPDEAFMDIIRLHRPAITSRRGLVRFSRIGQRGSMYTRSGKHIGGRVHFFKDISPISAAAEEIELHPLVAAAQDHSGLFDIYAEPDPDPVAVNTSGSLSSASTPFAQSSLSSAPWGNTTVPLSLPGDIFIQPGPDITFPTAPTVTPYNPVTPALPTGPVFITASGFYLYPTWYFTRKRRKRVSLFFTDVAA</sequence>
<evidence type="ECO:0000255" key="1">
    <source>
        <dbReference type="HAMAP-Rule" id="MF_04003"/>
    </source>
</evidence>
<organism>
    <name type="scientific">Human papillomavirus 13</name>
    <dbReference type="NCBI Taxonomy" id="10573"/>
    <lineage>
        <taxon>Viruses</taxon>
        <taxon>Monodnaviria</taxon>
        <taxon>Shotokuvirae</taxon>
        <taxon>Cossaviricota</taxon>
        <taxon>Papovaviricetes</taxon>
        <taxon>Zurhausenvirales</taxon>
        <taxon>Papillomaviridae</taxon>
        <taxon>Firstpapillomavirinae</taxon>
        <taxon>Alphapapillomavirus</taxon>
        <taxon>Alphapapillomavirus 10</taxon>
    </lineage>
</organism>
<feature type="chain" id="PRO_0000133580" description="Minor capsid protein L2">
    <location>
        <begin position="1"/>
        <end position="463"/>
    </location>
</feature>
<feature type="short sequence motif" description="Nuclear localization signal" evidence="1">
    <location>
        <begin position="1"/>
        <end position="12"/>
    </location>
</feature>
<feature type="short sequence motif" description="Nuclear localization signal" evidence="1">
    <location>
        <begin position="446"/>
        <end position="454"/>
    </location>
</feature>
<feature type="disulfide bond" evidence="1">
    <location>
        <begin position="21"/>
        <end position="27"/>
    </location>
</feature>
<reference key="1">
    <citation type="journal article" date="1992" name="Virology">
        <title>Human papillomavirus type 13 and pygmy chimpanzee papillomavirus type 1: comparison of the genome organizations.</title>
        <authorList>
            <person name="van Ranst M."/>
            <person name="Fuse A."/>
            <person name="Fiten P."/>
            <person name="Beuken E."/>
            <person name="Pfister H."/>
            <person name="Burk R.D."/>
            <person name="Opdenakker G."/>
        </authorList>
    </citation>
    <scope>NUCLEOTIDE SEQUENCE [GENOMIC DNA]</scope>
</reference>
<accession>Q02275</accession>
<dbReference type="EMBL" id="X62843">
    <property type="protein sequence ID" value="CAA44653.1"/>
    <property type="molecule type" value="Genomic_DNA"/>
</dbReference>
<dbReference type="PIR" id="G42955">
    <property type="entry name" value="P2WL13"/>
</dbReference>
<dbReference type="Proteomes" id="UP000009107">
    <property type="component" value="Genome"/>
</dbReference>
<dbReference type="GO" id="GO:0043657">
    <property type="term" value="C:host cell"/>
    <property type="evidence" value="ECO:0007669"/>
    <property type="project" value="GOC"/>
</dbReference>
<dbReference type="GO" id="GO:0044174">
    <property type="term" value="C:host cell endosome"/>
    <property type="evidence" value="ECO:0007669"/>
    <property type="project" value="UniProtKB-KW"/>
</dbReference>
<dbReference type="GO" id="GO:0044177">
    <property type="term" value="C:host cell Golgi apparatus"/>
    <property type="evidence" value="ECO:0007669"/>
    <property type="project" value="UniProtKB-SubCell"/>
</dbReference>
<dbReference type="GO" id="GO:0042025">
    <property type="term" value="C:host cell nucleus"/>
    <property type="evidence" value="ECO:0007669"/>
    <property type="project" value="UniProtKB-SubCell"/>
</dbReference>
<dbReference type="GO" id="GO:0019028">
    <property type="term" value="C:viral capsid"/>
    <property type="evidence" value="ECO:0007669"/>
    <property type="project" value="UniProtKB-UniRule"/>
</dbReference>
<dbReference type="GO" id="GO:0003677">
    <property type="term" value="F:DNA binding"/>
    <property type="evidence" value="ECO:0007669"/>
    <property type="project" value="UniProtKB-UniRule"/>
</dbReference>
<dbReference type="GO" id="GO:0005198">
    <property type="term" value="F:structural molecule activity"/>
    <property type="evidence" value="ECO:0007669"/>
    <property type="project" value="UniProtKB-UniRule"/>
</dbReference>
<dbReference type="GO" id="GO:0075521">
    <property type="term" value="P:microtubule-dependent intracellular transport of viral material towards nucleus"/>
    <property type="evidence" value="ECO:0007669"/>
    <property type="project" value="UniProtKB-UniRule"/>
</dbReference>
<dbReference type="GO" id="GO:0046718">
    <property type="term" value="P:symbiont entry into host cell"/>
    <property type="evidence" value="ECO:0007669"/>
    <property type="project" value="UniProtKB-KW"/>
</dbReference>
<dbReference type="GO" id="GO:0075732">
    <property type="term" value="P:viral penetration into host nucleus"/>
    <property type="evidence" value="ECO:0007669"/>
    <property type="project" value="UniProtKB-KW"/>
</dbReference>
<dbReference type="HAMAP" id="MF_04003">
    <property type="entry name" value="PPV_L2"/>
    <property type="match status" value="1"/>
</dbReference>
<dbReference type="InterPro" id="IPR000784">
    <property type="entry name" value="Late_L2"/>
</dbReference>
<dbReference type="Pfam" id="PF00513">
    <property type="entry name" value="Late_protein_L2"/>
    <property type="match status" value="1"/>
</dbReference>